<name>AMPP1_BLAGS</name>
<keyword id="KW-0031">Aminopeptidase</keyword>
<keyword id="KW-0378">Hydrolase</keyword>
<keyword id="KW-0464">Manganese</keyword>
<keyword id="KW-0479">Metal-binding</keyword>
<keyword id="KW-0482">Metalloprotease</keyword>
<keyword id="KW-0645">Protease</keyword>
<keyword id="KW-1185">Reference proteome</keyword>
<comment type="function">
    <text evidence="1">Catalyzes the removal of a penultimate prolyl residue from the N-termini of peptides.</text>
</comment>
<comment type="catalytic activity">
    <reaction>
        <text>Release of any N-terminal amino acid, including proline, that is linked to proline, even from a dipeptide or tripeptide.</text>
        <dbReference type="EC" id="3.4.11.9"/>
    </reaction>
</comment>
<comment type="cofactor">
    <cofactor evidence="1">
        <name>Mn(2+)</name>
        <dbReference type="ChEBI" id="CHEBI:29035"/>
    </cofactor>
    <text evidence="1">Binds 2 manganese ions per subunit.</text>
</comment>
<comment type="similarity">
    <text evidence="2">Belongs to the peptidase M24B family.</text>
</comment>
<comment type="sequence caution" evidence="2">
    <conflict type="erroneous initiation">
        <sequence resource="EMBL-CDS" id="OAT13260"/>
    </conflict>
    <text>Extended N-terminus.</text>
</comment>
<protein>
    <recommendedName>
        <fullName>Probable Xaa-Pro aminopeptidase P</fullName>
        <shortName>AMPP</shortName>
        <shortName>Aminopeptidase P</shortName>
        <ecNumber>3.4.11.9</ecNumber>
    </recommendedName>
    <alternativeName>
        <fullName>Aminoacylproline aminopeptidase</fullName>
    </alternativeName>
    <alternativeName>
        <fullName>Prolidase</fullName>
    </alternativeName>
</protein>
<accession>C5K105</accession>
<accession>A0A179UZJ0</accession>
<proteinExistence type="inferred from homology"/>
<gene>
    <name type="primary">AMPP</name>
    <name type="ORF">BDBG_08499</name>
</gene>
<dbReference type="EC" id="3.4.11.9"/>
<dbReference type="EMBL" id="GG657471">
    <property type="protein sequence ID" value="OAT13260.1"/>
    <property type="status" value="ALT_INIT"/>
    <property type="molecule type" value="Genomic_DNA"/>
</dbReference>
<dbReference type="RefSeq" id="XP_002621127.1">
    <property type="nucleotide sequence ID" value="XM_002621081.1"/>
</dbReference>
<dbReference type="SMR" id="C5K105"/>
<dbReference type="STRING" id="559298.C5K105"/>
<dbReference type="MEROPS" id="M24.009"/>
<dbReference type="GeneID" id="8508590"/>
<dbReference type="KEGG" id="bgh:BDBG_08499"/>
<dbReference type="HOGENOM" id="CLU_011781_2_2_1"/>
<dbReference type="OrthoDB" id="9995434at2759"/>
<dbReference type="Proteomes" id="UP000002038">
    <property type="component" value="Unassembled WGS sequence"/>
</dbReference>
<dbReference type="GO" id="GO:0005737">
    <property type="term" value="C:cytoplasm"/>
    <property type="evidence" value="ECO:0007669"/>
    <property type="project" value="UniProtKB-ARBA"/>
</dbReference>
<dbReference type="GO" id="GO:0046872">
    <property type="term" value="F:metal ion binding"/>
    <property type="evidence" value="ECO:0007669"/>
    <property type="project" value="UniProtKB-KW"/>
</dbReference>
<dbReference type="GO" id="GO:0070006">
    <property type="term" value="F:metalloaminopeptidase activity"/>
    <property type="evidence" value="ECO:0007669"/>
    <property type="project" value="InterPro"/>
</dbReference>
<dbReference type="GO" id="GO:0006508">
    <property type="term" value="P:proteolysis"/>
    <property type="evidence" value="ECO:0007669"/>
    <property type="project" value="UniProtKB-KW"/>
</dbReference>
<dbReference type="CDD" id="cd01085">
    <property type="entry name" value="APP"/>
    <property type="match status" value="1"/>
</dbReference>
<dbReference type="FunFam" id="3.40.350.10:FF:000010">
    <property type="entry name" value="Probable Xaa-Pro aminopeptidase P"/>
    <property type="match status" value="1"/>
</dbReference>
<dbReference type="FunFam" id="3.90.230.10:FF:000007">
    <property type="entry name" value="Xaa-Pro aminopeptidase P"/>
    <property type="match status" value="1"/>
</dbReference>
<dbReference type="FunFam" id="3.40.350.10:FF:000003">
    <property type="entry name" value="Xaa-pro aminopeptidase P"/>
    <property type="match status" value="1"/>
</dbReference>
<dbReference type="Gene3D" id="3.90.230.10">
    <property type="entry name" value="Creatinase/methionine aminopeptidase superfamily"/>
    <property type="match status" value="1"/>
</dbReference>
<dbReference type="Gene3D" id="3.40.350.10">
    <property type="entry name" value="Creatinase/prolidase N-terminal domain"/>
    <property type="match status" value="2"/>
</dbReference>
<dbReference type="InterPro" id="IPR029149">
    <property type="entry name" value="Creatin/AminoP/Spt16_N"/>
</dbReference>
<dbReference type="InterPro" id="IPR036005">
    <property type="entry name" value="Creatinase/aminopeptidase-like"/>
</dbReference>
<dbReference type="InterPro" id="IPR000587">
    <property type="entry name" value="Creatinase_N"/>
</dbReference>
<dbReference type="InterPro" id="IPR000994">
    <property type="entry name" value="Pept_M24"/>
</dbReference>
<dbReference type="InterPro" id="IPR033740">
    <property type="entry name" value="Pept_M24B"/>
</dbReference>
<dbReference type="InterPro" id="IPR032416">
    <property type="entry name" value="Peptidase_M24_C"/>
</dbReference>
<dbReference type="InterPro" id="IPR001131">
    <property type="entry name" value="Peptidase_M24B_aminopep-P_CS"/>
</dbReference>
<dbReference type="InterPro" id="IPR050422">
    <property type="entry name" value="X-Pro_aminopeptidase_P"/>
</dbReference>
<dbReference type="PANTHER" id="PTHR43763">
    <property type="entry name" value="XAA-PRO AMINOPEPTIDASE 1"/>
    <property type="match status" value="1"/>
</dbReference>
<dbReference type="PANTHER" id="PTHR43763:SF6">
    <property type="entry name" value="XAA-PRO AMINOPEPTIDASE 1"/>
    <property type="match status" value="1"/>
</dbReference>
<dbReference type="Pfam" id="PF01321">
    <property type="entry name" value="Creatinase_N"/>
    <property type="match status" value="1"/>
</dbReference>
<dbReference type="Pfam" id="PF16189">
    <property type="entry name" value="Creatinase_N_2"/>
    <property type="match status" value="1"/>
</dbReference>
<dbReference type="Pfam" id="PF00557">
    <property type="entry name" value="Peptidase_M24"/>
    <property type="match status" value="1"/>
</dbReference>
<dbReference type="Pfam" id="PF16188">
    <property type="entry name" value="Peptidase_M24_C"/>
    <property type="match status" value="1"/>
</dbReference>
<dbReference type="SUPFAM" id="SSF55920">
    <property type="entry name" value="Creatinase/aminopeptidase"/>
    <property type="match status" value="1"/>
</dbReference>
<dbReference type="SUPFAM" id="SSF53092">
    <property type="entry name" value="Creatinase/prolidase N-terminal domain"/>
    <property type="match status" value="1"/>
</dbReference>
<dbReference type="PROSITE" id="PS00491">
    <property type="entry name" value="PROLINE_PEPTIDASE"/>
    <property type="match status" value="1"/>
</dbReference>
<feature type="chain" id="PRO_0000411774" description="Probable Xaa-Pro aminopeptidase P">
    <location>
        <begin position="1"/>
        <end position="617"/>
    </location>
</feature>
<feature type="binding site" evidence="1">
    <location>
        <position position="414"/>
    </location>
    <ligand>
        <name>Mn(2+)</name>
        <dbReference type="ChEBI" id="CHEBI:29035"/>
        <label>2</label>
    </ligand>
</feature>
<feature type="binding site" evidence="1">
    <location>
        <position position="425"/>
    </location>
    <ligand>
        <name>Mn(2+)</name>
        <dbReference type="ChEBI" id="CHEBI:29035"/>
        <label>1</label>
    </ligand>
</feature>
<feature type="binding site" evidence="1">
    <location>
        <position position="425"/>
    </location>
    <ligand>
        <name>Mn(2+)</name>
        <dbReference type="ChEBI" id="CHEBI:29035"/>
        <label>2</label>
    </ligand>
</feature>
<feature type="binding site" evidence="1">
    <location>
        <position position="523"/>
    </location>
    <ligand>
        <name>Mn(2+)</name>
        <dbReference type="ChEBI" id="CHEBI:29035"/>
        <label>1</label>
    </ligand>
</feature>
<feature type="binding site" evidence="1">
    <location>
        <position position="537"/>
    </location>
    <ligand>
        <name>Mn(2+)</name>
        <dbReference type="ChEBI" id="CHEBI:29035"/>
        <label>1</label>
    </ligand>
</feature>
<feature type="binding site" evidence="1">
    <location>
        <position position="537"/>
    </location>
    <ligand>
        <name>Mn(2+)</name>
        <dbReference type="ChEBI" id="CHEBI:29035"/>
        <label>2</label>
    </ligand>
</feature>
<evidence type="ECO:0000250" key="1"/>
<evidence type="ECO:0000305" key="2"/>
<organism>
    <name type="scientific">Blastomyces gilchristii (strain SLH14081)</name>
    <name type="common">Blastomyces dermatitidis</name>
    <dbReference type="NCBI Taxonomy" id="559298"/>
    <lineage>
        <taxon>Eukaryota</taxon>
        <taxon>Fungi</taxon>
        <taxon>Dikarya</taxon>
        <taxon>Ascomycota</taxon>
        <taxon>Pezizomycotina</taxon>
        <taxon>Eurotiomycetes</taxon>
        <taxon>Eurotiomycetidae</taxon>
        <taxon>Onygenales</taxon>
        <taxon>Ajellomycetaceae</taxon>
        <taxon>Blastomyces</taxon>
    </lineage>
</organism>
<reference key="1">
    <citation type="journal article" date="2015" name="PLoS Genet.">
        <title>The dynamic genome and transcriptome of the human fungal pathogen Blastomyces and close relative Emmonsia.</title>
        <authorList>
            <person name="Munoz J.F."/>
            <person name="Gauthier G.M."/>
            <person name="Desjardins C.A."/>
            <person name="Gallo J.E."/>
            <person name="Holder J."/>
            <person name="Sullivan T.D."/>
            <person name="Marty A.J."/>
            <person name="Carmen J.C."/>
            <person name="Chen Z."/>
            <person name="Ding L."/>
            <person name="Gujja S."/>
            <person name="Magrini V."/>
            <person name="Misas E."/>
            <person name="Mitreva M."/>
            <person name="Priest M."/>
            <person name="Saif S."/>
            <person name="Whiston E.A."/>
            <person name="Young S."/>
            <person name="Zeng Q."/>
            <person name="Goldman W.E."/>
            <person name="Mardis E.R."/>
            <person name="Taylor J.W."/>
            <person name="McEwen J.G."/>
            <person name="Clay O.K."/>
            <person name="Klein B.S."/>
            <person name="Cuomo C.A."/>
        </authorList>
    </citation>
    <scope>NUCLEOTIDE SEQUENCE [LARGE SCALE GENOMIC DNA]</scope>
    <source>
        <strain>SLH14081</strain>
    </source>
</reference>
<sequence length="617" mass="68558">MGPVDTSQRLARLRELMQERKVDVYIVPSEDSHQSEYIAPCDGRREFISGFTGSAGCAIVSMSKAALSTDGRYFNQAAKQLDNNWMLLKRGFENMPTWQEWTAEQAEGGKVVGVDPSLITASEARSLSETIEKSGGSLQGVQENLIDLVWGKKRPARPSEKVALHPIEFAGKSFEEKISDLRKELQKKKSAGFVISMLDEIAWLFNLRGNDIPYNPVFFAYAIITPTTADLYIDDEKLPAEVKKYLGDQVSVKPYGSIFEDAKALSQSAQKKSDGDASTSPSEKFLISTKASWSLSLALGGEKNVEEVRSPITDAKAIKNEAELEGMRACHIRDGAALTEYFAWLENELVNKKTVLNEVDGSDKLEQIRSKHKHFVGLSFDTISSTGPNAAVIHYKAERDTCSIIDPKAVYLCDSGAQYLDGTTDTTRTLHFGEPTEMERKAYTLVLKGLISIDTAVFPKGTTGFALDAFARQHLWKEGLDYLHGTGHGVGSYLNVHEGPIGLGTRVQYAEVAITPGNVISDEPGFYEDGVFGIRIENIIIAKEVKTTHGFGEKPWLGFEHVTMTPLCQKLINPSLLTDGEKKWVNDYHSKVWEKTSSYFENDELTRNWLKRETQPI</sequence>